<accession>Q3MBP7</accession>
<organism>
    <name type="scientific">Trichormus variabilis (strain ATCC 29413 / PCC 7937)</name>
    <name type="common">Anabaena variabilis</name>
    <dbReference type="NCBI Taxonomy" id="240292"/>
    <lineage>
        <taxon>Bacteria</taxon>
        <taxon>Bacillati</taxon>
        <taxon>Cyanobacteriota</taxon>
        <taxon>Cyanophyceae</taxon>
        <taxon>Nostocales</taxon>
        <taxon>Nostocaceae</taxon>
        <taxon>Trichormus</taxon>
    </lineage>
</organism>
<name>LGT_TRIV2</name>
<gene>
    <name evidence="1" type="primary">lgt</name>
    <name type="ordered locus">Ava_1967</name>
</gene>
<keyword id="KW-0997">Cell inner membrane</keyword>
<keyword id="KW-1003">Cell membrane</keyword>
<keyword id="KW-0472">Membrane</keyword>
<keyword id="KW-0808">Transferase</keyword>
<keyword id="KW-0812">Transmembrane</keyword>
<keyword id="KW-1133">Transmembrane helix</keyword>
<sequence>MALPLAFLFTSPGPVLVEIGPITIRWYGLLIATAVLIGVSLSQYLAKRRQVNPDLLSDLSIWLVIGAIPAARIYYVLFQWSEYAQHPERIIAIWQGGIAIHGAIIGGTLAALIFAKLKRVPFWQLADLVAPSLILGQAIGRWGNFFNSEAFGRPTNLPWKLYIPIERRPPDLASFEYFHPTFLYESIWDLMVFALLITLFFRSLAGKPRLKVGTLFMVYLATYSLGRLWIEGLRTDSLMLGPLRIAQVVSLTGITLGLAGLAWLYVRKRPLPDVVSSPKDTE</sequence>
<dbReference type="EC" id="2.5.1.145" evidence="1"/>
<dbReference type="EMBL" id="CP000117">
    <property type="protein sequence ID" value="ABA21589.1"/>
    <property type="molecule type" value="Genomic_DNA"/>
</dbReference>
<dbReference type="SMR" id="Q3MBP7"/>
<dbReference type="STRING" id="240292.Ava_1967"/>
<dbReference type="KEGG" id="ava:Ava_1967"/>
<dbReference type="eggNOG" id="COG0682">
    <property type="taxonomic scope" value="Bacteria"/>
</dbReference>
<dbReference type="HOGENOM" id="CLU_013386_1_2_3"/>
<dbReference type="UniPathway" id="UPA00664"/>
<dbReference type="Proteomes" id="UP000002533">
    <property type="component" value="Chromosome"/>
</dbReference>
<dbReference type="GO" id="GO:0005886">
    <property type="term" value="C:plasma membrane"/>
    <property type="evidence" value="ECO:0007669"/>
    <property type="project" value="UniProtKB-SubCell"/>
</dbReference>
<dbReference type="GO" id="GO:0008961">
    <property type="term" value="F:phosphatidylglycerol-prolipoprotein diacylglyceryl transferase activity"/>
    <property type="evidence" value="ECO:0007669"/>
    <property type="project" value="UniProtKB-UniRule"/>
</dbReference>
<dbReference type="GO" id="GO:0042158">
    <property type="term" value="P:lipoprotein biosynthetic process"/>
    <property type="evidence" value="ECO:0007669"/>
    <property type="project" value="UniProtKB-UniRule"/>
</dbReference>
<dbReference type="HAMAP" id="MF_01147">
    <property type="entry name" value="Lgt"/>
    <property type="match status" value="1"/>
</dbReference>
<dbReference type="InterPro" id="IPR001640">
    <property type="entry name" value="Lgt"/>
</dbReference>
<dbReference type="NCBIfam" id="TIGR00544">
    <property type="entry name" value="lgt"/>
    <property type="match status" value="1"/>
</dbReference>
<dbReference type="PANTHER" id="PTHR30589:SF0">
    <property type="entry name" value="PHOSPHATIDYLGLYCEROL--PROLIPOPROTEIN DIACYLGLYCERYL TRANSFERASE"/>
    <property type="match status" value="1"/>
</dbReference>
<dbReference type="PANTHER" id="PTHR30589">
    <property type="entry name" value="PROLIPOPROTEIN DIACYLGLYCERYL TRANSFERASE"/>
    <property type="match status" value="1"/>
</dbReference>
<dbReference type="Pfam" id="PF01790">
    <property type="entry name" value="LGT"/>
    <property type="match status" value="1"/>
</dbReference>
<dbReference type="PROSITE" id="PS01311">
    <property type="entry name" value="LGT"/>
    <property type="match status" value="1"/>
</dbReference>
<reference key="1">
    <citation type="journal article" date="2014" name="Stand. Genomic Sci.">
        <title>Complete genome sequence of Anabaena variabilis ATCC 29413.</title>
        <authorList>
            <person name="Thiel T."/>
            <person name="Pratte B.S."/>
            <person name="Zhong J."/>
            <person name="Goodwin L."/>
            <person name="Copeland A."/>
            <person name="Lucas S."/>
            <person name="Han C."/>
            <person name="Pitluck S."/>
            <person name="Land M.L."/>
            <person name="Kyrpides N.C."/>
            <person name="Woyke T."/>
        </authorList>
    </citation>
    <scope>NUCLEOTIDE SEQUENCE [LARGE SCALE GENOMIC DNA]</scope>
    <source>
        <strain>ATCC 29413 / PCC 7937</strain>
    </source>
</reference>
<feature type="chain" id="PRO_1000053386" description="Phosphatidylglycerol--prolipoprotein diacylglyceryl transferase">
    <location>
        <begin position="1"/>
        <end position="282"/>
    </location>
</feature>
<feature type="transmembrane region" description="Helical" evidence="1">
    <location>
        <begin position="19"/>
        <end position="39"/>
    </location>
</feature>
<feature type="transmembrane region" description="Helical" evidence="1">
    <location>
        <begin position="59"/>
        <end position="79"/>
    </location>
</feature>
<feature type="transmembrane region" description="Helical" evidence="1">
    <location>
        <begin position="90"/>
        <end position="110"/>
    </location>
</feature>
<feature type="transmembrane region" description="Helical" evidence="1">
    <location>
        <begin position="120"/>
        <end position="140"/>
    </location>
</feature>
<feature type="transmembrane region" description="Helical" evidence="1">
    <location>
        <begin position="181"/>
        <end position="201"/>
    </location>
</feature>
<feature type="transmembrane region" description="Helical" evidence="1">
    <location>
        <begin position="212"/>
        <end position="232"/>
    </location>
</feature>
<feature type="transmembrane region" description="Helical" evidence="1">
    <location>
        <begin position="245"/>
        <end position="265"/>
    </location>
</feature>
<feature type="binding site" evidence="1">
    <location>
        <position position="141"/>
    </location>
    <ligand>
        <name>a 1,2-diacyl-sn-glycero-3-phospho-(1'-sn-glycerol)</name>
        <dbReference type="ChEBI" id="CHEBI:64716"/>
    </ligand>
</feature>
<comment type="function">
    <text evidence="1">Catalyzes the transfer of the diacylglyceryl group from phosphatidylglycerol to the sulfhydryl group of the N-terminal cysteine of a prolipoprotein, the first step in the formation of mature lipoproteins.</text>
</comment>
<comment type="catalytic activity">
    <reaction evidence="1">
        <text>L-cysteinyl-[prolipoprotein] + a 1,2-diacyl-sn-glycero-3-phospho-(1'-sn-glycerol) = an S-1,2-diacyl-sn-glyceryl-L-cysteinyl-[prolipoprotein] + sn-glycerol 1-phosphate + H(+)</text>
        <dbReference type="Rhea" id="RHEA:56712"/>
        <dbReference type="Rhea" id="RHEA-COMP:14679"/>
        <dbReference type="Rhea" id="RHEA-COMP:14680"/>
        <dbReference type="ChEBI" id="CHEBI:15378"/>
        <dbReference type="ChEBI" id="CHEBI:29950"/>
        <dbReference type="ChEBI" id="CHEBI:57685"/>
        <dbReference type="ChEBI" id="CHEBI:64716"/>
        <dbReference type="ChEBI" id="CHEBI:140658"/>
        <dbReference type="EC" id="2.5.1.145"/>
    </reaction>
</comment>
<comment type="pathway">
    <text evidence="1">Protein modification; lipoprotein biosynthesis (diacylglyceryl transfer).</text>
</comment>
<comment type="subcellular location">
    <subcellularLocation>
        <location evidence="1">Cell inner membrane</location>
        <topology evidence="1">Multi-pass membrane protein</topology>
    </subcellularLocation>
</comment>
<comment type="similarity">
    <text evidence="1">Belongs to the Lgt family.</text>
</comment>
<evidence type="ECO:0000255" key="1">
    <source>
        <dbReference type="HAMAP-Rule" id="MF_01147"/>
    </source>
</evidence>
<protein>
    <recommendedName>
        <fullName evidence="1">Phosphatidylglycerol--prolipoprotein diacylglyceryl transferase</fullName>
        <ecNumber evidence="1">2.5.1.145</ecNumber>
    </recommendedName>
</protein>
<proteinExistence type="inferred from homology"/>